<gene>
    <name evidence="1" type="primary">rpsK</name>
    <name type="ordered locus">Ajs_0404</name>
</gene>
<sequence>MAKSPANNAAQRVRKKVRKNISDGIAHVHASFNNTIITITDRQGNALSWASSGGQGFKGSRKSTPFAAQVASEVAGRAAIEQGIKNLDVEIKGPGPGRESSVRALGALGIRITSISDVTPVPHNGCRPQKRRRI</sequence>
<accession>A1W331</accession>
<proteinExistence type="inferred from homology"/>
<dbReference type="EMBL" id="CP000539">
    <property type="protein sequence ID" value="ABM40656.1"/>
    <property type="molecule type" value="Genomic_DNA"/>
</dbReference>
<dbReference type="SMR" id="A1W331"/>
<dbReference type="STRING" id="232721.Ajs_0404"/>
<dbReference type="KEGG" id="ajs:Ajs_0404"/>
<dbReference type="eggNOG" id="COG0100">
    <property type="taxonomic scope" value="Bacteria"/>
</dbReference>
<dbReference type="HOGENOM" id="CLU_072439_5_0_4"/>
<dbReference type="Proteomes" id="UP000000645">
    <property type="component" value="Chromosome"/>
</dbReference>
<dbReference type="GO" id="GO:1990904">
    <property type="term" value="C:ribonucleoprotein complex"/>
    <property type="evidence" value="ECO:0007669"/>
    <property type="project" value="UniProtKB-KW"/>
</dbReference>
<dbReference type="GO" id="GO:0005840">
    <property type="term" value="C:ribosome"/>
    <property type="evidence" value="ECO:0007669"/>
    <property type="project" value="UniProtKB-KW"/>
</dbReference>
<dbReference type="GO" id="GO:0019843">
    <property type="term" value="F:rRNA binding"/>
    <property type="evidence" value="ECO:0007669"/>
    <property type="project" value="UniProtKB-UniRule"/>
</dbReference>
<dbReference type="GO" id="GO:0003735">
    <property type="term" value="F:structural constituent of ribosome"/>
    <property type="evidence" value="ECO:0007669"/>
    <property type="project" value="InterPro"/>
</dbReference>
<dbReference type="GO" id="GO:0006412">
    <property type="term" value="P:translation"/>
    <property type="evidence" value="ECO:0007669"/>
    <property type="project" value="UniProtKB-UniRule"/>
</dbReference>
<dbReference type="FunFam" id="3.30.420.80:FF:000001">
    <property type="entry name" value="30S ribosomal protein S11"/>
    <property type="match status" value="1"/>
</dbReference>
<dbReference type="Gene3D" id="3.30.420.80">
    <property type="entry name" value="Ribosomal protein S11"/>
    <property type="match status" value="1"/>
</dbReference>
<dbReference type="HAMAP" id="MF_01310">
    <property type="entry name" value="Ribosomal_uS11"/>
    <property type="match status" value="1"/>
</dbReference>
<dbReference type="InterPro" id="IPR001971">
    <property type="entry name" value="Ribosomal_uS11"/>
</dbReference>
<dbReference type="InterPro" id="IPR019981">
    <property type="entry name" value="Ribosomal_uS11_bac-type"/>
</dbReference>
<dbReference type="InterPro" id="IPR018102">
    <property type="entry name" value="Ribosomal_uS11_CS"/>
</dbReference>
<dbReference type="InterPro" id="IPR036967">
    <property type="entry name" value="Ribosomal_uS11_sf"/>
</dbReference>
<dbReference type="NCBIfam" id="NF003698">
    <property type="entry name" value="PRK05309.1"/>
    <property type="match status" value="1"/>
</dbReference>
<dbReference type="NCBIfam" id="TIGR03632">
    <property type="entry name" value="uS11_bact"/>
    <property type="match status" value="1"/>
</dbReference>
<dbReference type="PANTHER" id="PTHR11759">
    <property type="entry name" value="40S RIBOSOMAL PROTEIN S14/30S RIBOSOMAL PROTEIN S11"/>
    <property type="match status" value="1"/>
</dbReference>
<dbReference type="Pfam" id="PF00411">
    <property type="entry name" value="Ribosomal_S11"/>
    <property type="match status" value="1"/>
</dbReference>
<dbReference type="PIRSF" id="PIRSF002131">
    <property type="entry name" value="Ribosomal_S11"/>
    <property type="match status" value="1"/>
</dbReference>
<dbReference type="SUPFAM" id="SSF53137">
    <property type="entry name" value="Translational machinery components"/>
    <property type="match status" value="1"/>
</dbReference>
<dbReference type="PROSITE" id="PS00054">
    <property type="entry name" value="RIBOSOMAL_S11"/>
    <property type="match status" value="1"/>
</dbReference>
<reference key="1">
    <citation type="submission" date="2006-12" db="EMBL/GenBank/DDBJ databases">
        <title>Complete sequence of chromosome 1 of Acidovorax sp. JS42.</title>
        <authorList>
            <person name="Copeland A."/>
            <person name="Lucas S."/>
            <person name="Lapidus A."/>
            <person name="Barry K."/>
            <person name="Detter J.C."/>
            <person name="Glavina del Rio T."/>
            <person name="Dalin E."/>
            <person name="Tice H."/>
            <person name="Pitluck S."/>
            <person name="Chertkov O."/>
            <person name="Brettin T."/>
            <person name="Bruce D."/>
            <person name="Han C."/>
            <person name="Tapia R."/>
            <person name="Gilna P."/>
            <person name="Schmutz J."/>
            <person name="Larimer F."/>
            <person name="Land M."/>
            <person name="Hauser L."/>
            <person name="Kyrpides N."/>
            <person name="Kim E."/>
            <person name="Stahl D."/>
            <person name="Richardson P."/>
        </authorList>
    </citation>
    <scope>NUCLEOTIDE SEQUENCE [LARGE SCALE GENOMIC DNA]</scope>
    <source>
        <strain>JS42</strain>
    </source>
</reference>
<comment type="function">
    <text evidence="1">Located on the platform of the 30S subunit, it bridges several disparate RNA helices of the 16S rRNA. Forms part of the Shine-Dalgarno cleft in the 70S ribosome.</text>
</comment>
<comment type="subunit">
    <text evidence="1">Part of the 30S ribosomal subunit. Interacts with proteins S7 and S18. Binds to IF-3.</text>
</comment>
<comment type="similarity">
    <text evidence="1">Belongs to the universal ribosomal protein uS11 family.</text>
</comment>
<evidence type="ECO:0000255" key="1">
    <source>
        <dbReference type="HAMAP-Rule" id="MF_01310"/>
    </source>
</evidence>
<evidence type="ECO:0000305" key="2"/>
<keyword id="KW-0687">Ribonucleoprotein</keyword>
<keyword id="KW-0689">Ribosomal protein</keyword>
<keyword id="KW-0694">RNA-binding</keyword>
<keyword id="KW-0699">rRNA-binding</keyword>
<organism>
    <name type="scientific">Acidovorax sp. (strain JS42)</name>
    <dbReference type="NCBI Taxonomy" id="232721"/>
    <lineage>
        <taxon>Bacteria</taxon>
        <taxon>Pseudomonadati</taxon>
        <taxon>Pseudomonadota</taxon>
        <taxon>Betaproteobacteria</taxon>
        <taxon>Burkholderiales</taxon>
        <taxon>Comamonadaceae</taxon>
        <taxon>Acidovorax</taxon>
    </lineage>
</organism>
<feature type="chain" id="PRO_0000294704" description="Small ribosomal subunit protein uS11">
    <location>
        <begin position="1"/>
        <end position="134"/>
    </location>
</feature>
<protein>
    <recommendedName>
        <fullName evidence="1">Small ribosomal subunit protein uS11</fullName>
    </recommendedName>
    <alternativeName>
        <fullName evidence="2">30S ribosomal protein S11</fullName>
    </alternativeName>
</protein>
<name>RS11_ACISJ</name>